<accession>Q940V4</accession>
<accession>Q8LFX3</accession>
<accession>Q9LH81</accession>
<keyword id="KW-1069">Brassinosteroid biosynthesis</keyword>
<keyword id="KW-0256">Endoplasmic reticulum</keyword>
<keyword id="KW-0349">Heme</keyword>
<keyword id="KW-0408">Iron</keyword>
<keyword id="KW-0444">Lipid biosynthesis</keyword>
<keyword id="KW-0443">Lipid metabolism</keyword>
<keyword id="KW-0449">Lipoprotein</keyword>
<keyword id="KW-0472">Membrane</keyword>
<keyword id="KW-0479">Metal-binding</keyword>
<keyword id="KW-0503">Monooxygenase</keyword>
<keyword id="KW-0560">Oxidoreductase</keyword>
<keyword id="KW-0636">Prenylation</keyword>
<keyword id="KW-1185">Reference proteome</keyword>
<keyword id="KW-0752">Steroid biosynthesis</keyword>
<keyword id="KW-0812">Transmembrane</keyword>
<keyword id="KW-1133">Transmembrane helix</keyword>
<name>C85A2_ARATH</name>
<proteinExistence type="evidence at protein level"/>
<protein>
    <recommendedName>
        <fullName>Cytochrome P450 85A2</fullName>
        <shortName>AtCYP85A2</shortName>
        <ecNumber evidence="6 7">1.14.14.180</ecNumber>
    </recommendedName>
    <alternativeName>
        <fullName evidence="14">28-norcastasterone synthase</fullName>
        <ecNumber evidence="8">1.14.14.-</ecNumber>
    </alternativeName>
    <alternativeName>
        <fullName evidence="14">28-nordeoxoteasterone synthase</fullName>
        <ecNumber evidence="8">1.14.14.-</ecNumber>
    </alternativeName>
    <alternativeName>
        <fullName evidence="14">28-norteasterone synthase</fullName>
        <ecNumber evidence="8">1.14.14.-</ecNumber>
    </alternativeName>
    <alternativeName>
        <fullName evidence="14">28-nortyphasterol synthase</fullName>
        <ecNumber evidence="8">1.14.14.-</ecNumber>
    </alternativeName>
    <alternativeName>
        <fullName evidence="11">3-dehydroteasterone synthase</fullName>
        <ecNumber evidence="3">1.14.14.179</ecNumber>
    </alternativeName>
    <alternativeName>
        <fullName evidence="13">Brassinolide synthase</fullName>
        <ecNumber evidence="5 6 7">1.14.14.180</ecNumber>
    </alternativeName>
    <alternativeName>
        <fullName evidence="12">Brassinosteroid-6-oxidase 2</fullName>
        <shortName evidence="12">BR6ox 2</shortName>
    </alternativeName>
    <alternativeName>
        <fullName evidence="12">C6-oxidase 2</fullName>
    </alternativeName>
    <alternativeName>
        <fullName evidence="11">Castasterone synthase</fullName>
        <ecNumber evidence="3 5 6">1.14.14.179</ecNumber>
    </alternativeName>
    <alternativeName>
        <fullName evidence="11">Teasterone synthase</fullName>
        <ecNumber evidence="3">1.14.14.179</ecNumber>
    </alternativeName>
    <alternativeName>
        <fullName evidence="11">Typhasterol synthase</fullName>
        <ecNumber evidence="3">1.14.14.179</ecNumber>
    </alternativeName>
</protein>
<reference key="1">
    <citation type="journal article" date="2003" name="Plant Physiol.">
        <title>Organ-specific expression of brassinosteroid-biosynthetic genes and distribution of endogenous brassinosteroids in Arabidopsis.</title>
        <authorList>
            <person name="Shimada Y."/>
            <person name="Goda H."/>
            <person name="Nakamura A."/>
            <person name="Takatsuto S."/>
            <person name="Fujioka S."/>
            <person name="Yoshida S."/>
        </authorList>
    </citation>
    <scope>NUCLEOTIDE SEQUENCE [MRNA]</scope>
    <scope>FUNCTION</scope>
    <scope>INDUCTION</scope>
    <scope>TISSUE SPECIFICITY</scope>
</reference>
<reference key="2">
    <citation type="journal article" date="2000" name="DNA Res.">
        <title>Structural analysis of Arabidopsis thaliana chromosome 3. II. Sequence features of the 4,251,695 bp regions covered by 90 P1, TAC and BAC clones.</title>
        <authorList>
            <person name="Kaneko T."/>
            <person name="Katoh T."/>
            <person name="Sato S."/>
            <person name="Nakamura Y."/>
            <person name="Asamizu E."/>
            <person name="Tabata S."/>
        </authorList>
    </citation>
    <scope>NUCLEOTIDE SEQUENCE [LARGE SCALE GENOMIC DNA]</scope>
    <source>
        <strain>cv. Columbia</strain>
    </source>
</reference>
<reference key="3">
    <citation type="journal article" date="2017" name="Plant J.">
        <title>Araport11: a complete reannotation of the Arabidopsis thaliana reference genome.</title>
        <authorList>
            <person name="Cheng C.Y."/>
            <person name="Krishnakumar V."/>
            <person name="Chan A.P."/>
            <person name="Thibaud-Nissen F."/>
            <person name="Schobel S."/>
            <person name="Town C.D."/>
        </authorList>
    </citation>
    <scope>GENOME REANNOTATION</scope>
    <source>
        <strain>cv. Columbia</strain>
    </source>
</reference>
<reference key="4">
    <citation type="journal article" date="2003" name="Science">
        <title>Empirical analysis of transcriptional activity in the Arabidopsis genome.</title>
        <authorList>
            <person name="Yamada K."/>
            <person name="Lim J."/>
            <person name="Dale J.M."/>
            <person name="Chen H."/>
            <person name="Shinn P."/>
            <person name="Palm C.J."/>
            <person name="Southwick A.M."/>
            <person name="Wu H.C."/>
            <person name="Kim C.J."/>
            <person name="Nguyen M."/>
            <person name="Pham P.K."/>
            <person name="Cheuk R.F."/>
            <person name="Karlin-Newmann G."/>
            <person name="Liu S.X."/>
            <person name="Lam B."/>
            <person name="Sakano H."/>
            <person name="Wu T."/>
            <person name="Yu G."/>
            <person name="Miranda M."/>
            <person name="Quach H.L."/>
            <person name="Tripp M."/>
            <person name="Chang C.H."/>
            <person name="Lee J.M."/>
            <person name="Toriumi M.J."/>
            <person name="Chan M.M."/>
            <person name="Tang C.C."/>
            <person name="Onodera C.S."/>
            <person name="Deng J.M."/>
            <person name="Akiyama K."/>
            <person name="Ansari Y."/>
            <person name="Arakawa T."/>
            <person name="Banh J."/>
            <person name="Banno F."/>
            <person name="Bowser L."/>
            <person name="Brooks S.Y."/>
            <person name="Carninci P."/>
            <person name="Chao Q."/>
            <person name="Choy N."/>
            <person name="Enju A."/>
            <person name="Goldsmith A.D."/>
            <person name="Gurjal M."/>
            <person name="Hansen N.F."/>
            <person name="Hayashizaki Y."/>
            <person name="Johnson-Hopson C."/>
            <person name="Hsuan V.W."/>
            <person name="Iida K."/>
            <person name="Karnes M."/>
            <person name="Khan S."/>
            <person name="Koesema E."/>
            <person name="Ishida J."/>
            <person name="Jiang P.X."/>
            <person name="Jones T."/>
            <person name="Kawai J."/>
            <person name="Kamiya A."/>
            <person name="Meyers C."/>
            <person name="Nakajima M."/>
            <person name="Narusaka M."/>
            <person name="Seki M."/>
            <person name="Sakurai T."/>
            <person name="Satou M."/>
            <person name="Tamse R."/>
            <person name="Vaysberg M."/>
            <person name="Wallender E.K."/>
            <person name="Wong C."/>
            <person name="Yamamura Y."/>
            <person name="Yuan S."/>
            <person name="Shinozaki K."/>
            <person name="Davis R.W."/>
            <person name="Theologis A."/>
            <person name="Ecker J.R."/>
        </authorList>
    </citation>
    <scope>NUCLEOTIDE SEQUENCE [LARGE SCALE MRNA]</scope>
    <source>
        <strain>cv. Columbia</strain>
    </source>
</reference>
<reference key="5">
    <citation type="submission" date="2002-03" db="EMBL/GenBank/DDBJ databases">
        <title>Full-length cDNA from Arabidopsis thaliana.</title>
        <authorList>
            <person name="Brover V.V."/>
            <person name="Troukhan M.E."/>
            <person name="Alexandrov N.A."/>
            <person name="Lu Y.-P."/>
            <person name="Flavell R.B."/>
            <person name="Feldmann K.A."/>
        </authorList>
    </citation>
    <scope>NUCLEOTIDE SEQUENCE [LARGE SCALE MRNA]</scope>
</reference>
<reference key="6">
    <citation type="journal article" date="2001" name="Plant Physiol.">
        <title>Brassinosteroid-6-oxidases from Arabidopsis and tomato catalyze multiple C-6 oxidations in brassinosteroid biosynthesis.</title>
        <authorList>
            <person name="Shimada Y."/>
            <person name="Fujioka S."/>
            <person name="Miyauchi N."/>
            <person name="Kushiro M."/>
            <person name="Takatsuto S."/>
            <person name="Nomura T."/>
            <person name="Yokota T."/>
            <person name="Kamiya Y."/>
            <person name="Bishop G.J."/>
            <person name="Yoshida S."/>
        </authorList>
    </citation>
    <scope>FUNCTION</scope>
    <scope>CATALYTIC ACTIVITY</scope>
    <scope>PATHWAY</scope>
</reference>
<reference key="7">
    <citation type="journal article" date="2005" name="J. Biol. Chem.">
        <title>The last reaction producing brassinolide is catalyzed by cytochrome P-450s, CYP85A3 in tomato and CYP85A2 in Arabidopsis.</title>
        <authorList>
            <person name="Nomura T."/>
            <person name="Kushiro T."/>
            <person name="Yokota T."/>
            <person name="Kamiya Y."/>
            <person name="Bishop G.J."/>
            <person name="Yamaguchi S."/>
        </authorList>
    </citation>
    <scope>FUNCTION</scope>
    <scope>CATALYTIC ACTIVITY</scope>
    <scope>PATHWAY</scope>
</reference>
<reference key="8">
    <citation type="journal article" date="2005" name="Plant Cell">
        <title>Arabidopsis CYP85A2, a cytochrome P450, mediates the Baeyer-Villiger oxidation of castasterone to brassinolide in brassinosteroid biosynthesis.</title>
        <authorList>
            <person name="Kim T.-W."/>
            <person name="Hwang J.-Y."/>
            <person name="Kim Y.-S."/>
            <person name="Joo S.-H."/>
            <person name="Chang S.C."/>
            <person name="Lee J.S."/>
            <person name="Takatsuto S."/>
            <person name="Kim S.-K."/>
        </authorList>
    </citation>
    <scope>FUNCTION</scope>
    <scope>DISRUPTION PHENOTYPE</scope>
    <scope>CATALYTIC ACTIVITY</scope>
    <scope>PATHWAY</scope>
</reference>
<reference key="9">
    <citation type="journal article" date="2008" name="Biosci. Biotechnol. Biochem.">
        <title>Arabidopsis CYP85A2 catalyzes lactonization reactions in the biosynthesis of 2-deoxy-7-oxalactone brassinosteroids.</title>
        <authorList>
            <person name="Katsumata T."/>
            <person name="Hasegawa A."/>
            <person name="Fujiwara T."/>
            <person name="Komatsu T."/>
            <person name="Notomi M."/>
            <person name="Abe H."/>
            <person name="Natsume M."/>
            <person name="Kawaide H."/>
        </authorList>
    </citation>
    <scope>FUNCTION</scope>
    <scope>CATALYTIC ACTIVITY</scope>
    <source>
        <strain>cv. Columbia</strain>
    </source>
</reference>
<reference key="10">
    <citation type="journal article" date="2012" name="J. Exp. Bot.">
        <title>Biosynthesis of a cholesterol-derived brassinosteroid, 28-norcastasterone, in Arabidopsis thaliana.</title>
        <authorList>
            <person name="Joo S.-H."/>
            <person name="Kim T.-W."/>
            <person name="Son S.-H."/>
            <person name="Lee W.S."/>
            <person name="Yokota T."/>
            <person name="Kim S.-K."/>
        </authorList>
    </citation>
    <scope>FUNCTION</scope>
    <scope>CATALYTIC ACTIVITY</scope>
    <scope>PATHWAY</scope>
    <source>
        <strain>cv. Columbia</strain>
    </source>
</reference>
<reference key="11">
    <citation type="journal article" date="2016" name="Nat. Plants">
        <title>Farnesylation mediates brassinosteroid biosynthesis to regulate abscisic acid responses.</title>
        <authorList>
            <person name="Northey J.G."/>
            <person name="Liang S."/>
            <person name="Jamshed M."/>
            <person name="Deb S."/>
            <person name="Foo E."/>
            <person name="Reid J.B."/>
            <person name="McCourt P."/>
            <person name="Samuel M.A."/>
        </authorList>
    </citation>
    <scope>FUNCTION</scope>
    <scope>DISRUPTION PHENOTYPE</scope>
    <scope>MUTAGENESIS OF CYS-462</scope>
    <scope>ISOPRENYLATION AT CYS-462</scope>
    <scope>SUBCELLULAR LOCATION</scope>
    <source>
        <strain>cv. Columbia</strain>
    </source>
</reference>
<reference key="12">
    <citation type="journal article" date="2020" name="Plant Cell Physiol.">
        <title>Light activates brassinosteroid biosynthesis to promote hook opening and petiole development in Arabidopsis thaliana.</title>
        <authorList>
            <person name="Hamasaki H."/>
            <person name="Ayano M."/>
            <person name="Nakamura A."/>
            <person name="Fujioka S."/>
            <person name="Asami T."/>
            <person name="Takatsuto S."/>
            <person name="Yoshida S."/>
            <person name="Oka Y."/>
            <person name="Matsui M."/>
            <person name="Shimada Y."/>
        </authorList>
    </citation>
    <scope>TISSUE SPECIFICITY</scope>
    <scope>INDUCTION BY LIGHT</scope>
</reference>
<gene>
    <name type="primary">CYP85A2</name>
    <name evidence="12" type="synonym">BR6OX2</name>
    <name evidence="16" type="ordered locus">At3g30180</name>
    <name evidence="17" type="ORF">T20F20.9</name>
    <name evidence="17" type="ORF">T20F20_6</name>
</gene>
<organism>
    <name type="scientific">Arabidopsis thaliana</name>
    <name type="common">Mouse-ear cress</name>
    <dbReference type="NCBI Taxonomy" id="3702"/>
    <lineage>
        <taxon>Eukaryota</taxon>
        <taxon>Viridiplantae</taxon>
        <taxon>Streptophyta</taxon>
        <taxon>Embryophyta</taxon>
        <taxon>Tracheophyta</taxon>
        <taxon>Spermatophyta</taxon>
        <taxon>Magnoliopsida</taxon>
        <taxon>eudicotyledons</taxon>
        <taxon>Gunneridae</taxon>
        <taxon>Pentapetalae</taxon>
        <taxon>rosids</taxon>
        <taxon>malvids</taxon>
        <taxon>Brassicales</taxon>
        <taxon>Brassicaceae</taxon>
        <taxon>Camelineae</taxon>
        <taxon>Arabidopsis</taxon>
    </lineage>
</organism>
<feature type="chain" id="PRO_0000052170" description="Cytochrome P450 85A2">
    <location>
        <begin position="1"/>
        <end position="465"/>
    </location>
</feature>
<feature type="transmembrane region" description="Helical" evidence="2">
    <location>
        <begin position="2"/>
        <end position="22"/>
    </location>
</feature>
<feature type="short sequence motif" description="Farnesylation CAAX motif" evidence="9">
    <location>
        <begin position="462"/>
        <end position="465"/>
    </location>
</feature>
<feature type="binding site" description="axial binding residue" evidence="1">
    <location>
        <position position="415"/>
    </location>
    <ligand>
        <name>heme</name>
        <dbReference type="ChEBI" id="CHEBI:30413"/>
    </ligand>
    <ligandPart>
        <name>Fe</name>
        <dbReference type="ChEBI" id="CHEBI:18248"/>
    </ligandPart>
</feature>
<feature type="lipid moiety-binding region" description="S-farnesyl cysteine" evidence="9">
    <location>
        <position position="462"/>
    </location>
</feature>
<feature type="mutagenesis site" description="Lost isoprenylation (farnesylation) leading to a reduced brassinolide accumulation but increased responsiveness to abscisic acid (ABA) and overall drought tolerance." evidence="9">
    <original>C</original>
    <variation>S</variation>
    <location>
        <position position="462"/>
    </location>
</feature>
<feature type="sequence conflict" description="In Ref. 1; BAB02270." evidence="15" ref="1">
    <original>V</original>
    <variation>F</variation>
    <location>
        <position position="221"/>
    </location>
</feature>
<sequence length="465" mass="53815">MGIMMMILGLLVIIVCLCTALLRWNQMRYSKKGLPPGTMGWPIFGETTEFLKQGPDFMKNQRLRYGSFFKSHILGCPTIVSMDAELNRYILMNESKGLVAGYPQSMLDILGTCNIAAVHGPSHRLMRGSLLSLISPTMMKDHLLPKIDDFMRNYLCGWDDLETVDIQEKTKHMAFLSSLLQIAETLKKPEVEEYRTEFFKLVVGTLSVPIDIPGTNYRSGVQARNNIDRLLTELMQERKESGETFTDMLGYLMKKEDNRYLLTDKEIRDQVVTILYSGYETVSTTSMMALKYLHDHPKALEELRREHLAIRERKRPDEPLTLDDIKSMKFTRAVIFETSRLATIVNGVLRKTTHDLELNGYLIPKGWRIYVYTREINYDTSLYEDPMIFNPWRWMEKSLESKSYFLLFGGGVRLCPGKELGISEVSSFLHYFVTKYRWEENGEDKLMVFPRVSAPKGYHLKCSPY</sequence>
<evidence type="ECO:0000250" key="1">
    <source>
        <dbReference type="UniProtKB" id="P04798"/>
    </source>
</evidence>
<evidence type="ECO:0000255" key="2"/>
<evidence type="ECO:0000269" key="3">
    <source>
    </source>
</evidence>
<evidence type="ECO:0000269" key="4">
    <source>
    </source>
</evidence>
<evidence type="ECO:0000269" key="5">
    <source>
    </source>
</evidence>
<evidence type="ECO:0000269" key="6">
    <source>
    </source>
</evidence>
<evidence type="ECO:0000269" key="7">
    <source>
    </source>
</evidence>
<evidence type="ECO:0000269" key="8">
    <source>
    </source>
</evidence>
<evidence type="ECO:0000269" key="9">
    <source>
    </source>
</evidence>
<evidence type="ECO:0000269" key="10">
    <source>
    </source>
</evidence>
<evidence type="ECO:0000303" key="11">
    <source>
    </source>
</evidence>
<evidence type="ECO:0000303" key="12">
    <source>
    </source>
</evidence>
<evidence type="ECO:0000303" key="13">
    <source>
    </source>
</evidence>
<evidence type="ECO:0000303" key="14">
    <source>
    </source>
</evidence>
<evidence type="ECO:0000305" key="15"/>
<evidence type="ECO:0000312" key="16">
    <source>
        <dbReference type="Araport" id="AT3G30180"/>
    </source>
</evidence>
<evidence type="ECO:0000312" key="17">
    <source>
        <dbReference type="EMBL" id="BAB02270.1"/>
    </source>
</evidence>
<comment type="function">
    <text evidence="3 4 5 6 7 8 9">Mediates Baeyer-Villiger oxidation and catalyzes the C6-oxidation step and lactonization in brassinosteroids biosynthesis (PubMed:15710611, PubMed:16024588). Converts 6-deoxocastasterone (6-deoxoCS) to castasterone (CS), and castasterone to brassinolide (BL) (PubMed:15710611, PubMed:16024588). May also convert 6-deoxoteasterone (6-deoxoTE) to teasterone (TE), 3-dehydro-6-deoxoteasterone (6-deoxo3DT, 6-deoxo-3-DHT) to 3-dehydroteasterone (3DT, 3-DHT), and 6-deoxotyphasterol (6-deoxoTY) to typhasterol (TY). Also seems to be able to convert teasterone (TE) and typhasterol (TY) to 7-oxateasterone (7-OXTE) and 7-oxatyphasterol (7-OXTY), respectively (PubMed:18685225). Catalyzes the conversion of 6-deoxo-28-norteasterone (6-deoxo-28-norTE) to 28-norteasterone (28-norTE), 6-deoxo-28-nordeoxoteasterone (6-deoxo-28-nor-3-DHT) to 28-nordeoxoteasterone (28-nor-3-DHT), 6-deoxo-28-nortyphasterol (6-deoxo-28-norTY) to 28-nortyphasterol (28-norTY) and 6-deoxo-28-norcastasterone (6-deoxo-28-norCS) to 28-norcastasterone (28-norCS) (PubMed:22170941). Involved in a negative regulation of responses to abscisic acid (ABA) and drought tolerance (PubMed:16024588, PubMed:27455172).</text>
</comment>
<comment type="catalytic activity">
    <reaction evidence="3">
        <text>6-deoxoteasterone + reduced [NADPH--hemoprotein reductase] + O2 = 6alpha-hydroxyteasterone + oxidized [NADPH--hemoprotein reductase] + H2O + H(+)</text>
        <dbReference type="Rhea" id="RHEA:69959"/>
        <dbReference type="Rhea" id="RHEA-COMP:11964"/>
        <dbReference type="Rhea" id="RHEA-COMP:11965"/>
        <dbReference type="ChEBI" id="CHEBI:15377"/>
        <dbReference type="ChEBI" id="CHEBI:15378"/>
        <dbReference type="ChEBI" id="CHEBI:15379"/>
        <dbReference type="ChEBI" id="CHEBI:20716"/>
        <dbReference type="ChEBI" id="CHEBI:57618"/>
        <dbReference type="ChEBI" id="CHEBI:58210"/>
        <dbReference type="ChEBI" id="CHEBI:188499"/>
    </reaction>
    <physiologicalReaction direction="left-to-right" evidence="3">
        <dbReference type="Rhea" id="RHEA:69960"/>
    </physiologicalReaction>
</comment>
<comment type="catalytic activity">
    <reaction evidence="3">
        <text>6alpha-hydroxytyphasterol + reduced [NADPH--hemoprotein reductase] + O2 = teasterone + oxidized [NADPH--hemoprotein reductase] + 2 H2O + H(+)</text>
        <dbReference type="Rhea" id="RHEA:69963"/>
        <dbReference type="Rhea" id="RHEA-COMP:11964"/>
        <dbReference type="Rhea" id="RHEA-COMP:11965"/>
        <dbReference type="ChEBI" id="CHEBI:15377"/>
        <dbReference type="ChEBI" id="CHEBI:15378"/>
        <dbReference type="ChEBI" id="CHEBI:15379"/>
        <dbReference type="ChEBI" id="CHEBI:26863"/>
        <dbReference type="ChEBI" id="CHEBI:57618"/>
        <dbReference type="ChEBI" id="CHEBI:58210"/>
        <dbReference type="ChEBI" id="CHEBI:188495"/>
    </reaction>
    <physiologicalReaction direction="left-to-right" evidence="3">
        <dbReference type="Rhea" id="RHEA:69964"/>
    </physiologicalReaction>
</comment>
<comment type="catalytic activity">
    <reaction evidence="3">
        <text>3-dehydro-6-deoxoteasterone + reduced [NADPH--hemoprotein reductase] + O2 = 3-dehydro-6alpha-hydroxyteasterone + oxidized [NADPH--hemoprotein reductase] + H2O + H(+)</text>
        <dbReference type="Rhea" id="RHEA:69947"/>
        <dbReference type="Rhea" id="RHEA-COMP:11964"/>
        <dbReference type="Rhea" id="RHEA-COMP:11965"/>
        <dbReference type="ChEBI" id="CHEBI:15377"/>
        <dbReference type="ChEBI" id="CHEBI:15378"/>
        <dbReference type="ChEBI" id="CHEBI:15379"/>
        <dbReference type="ChEBI" id="CHEBI:20710"/>
        <dbReference type="ChEBI" id="CHEBI:57618"/>
        <dbReference type="ChEBI" id="CHEBI:58210"/>
        <dbReference type="ChEBI" id="CHEBI:188496"/>
    </reaction>
    <physiologicalReaction direction="left-to-right" evidence="3">
        <dbReference type="Rhea" id="RHEA:69948"/>
    </physiologicalReaction>
</comment>
<comment type="catalytic activity">
    <reaction evidence="3">
        <text>3-dehydro-6alpha-hydroxyteasterone + reduced [NADPH--hemoprotein reductase] + O2 = 3-dehydroteasterone + oxidized [NADPH--hemoprotein reductase] + 2 H2O + H(+)</text>
        <dbReference type="Rhea" id="RHEA:69951"/>
        <dbReference type="Rhea" id="RHEA-COMP:11964"/>
        <dbReference type="Rhea" id="RHEA-COMP:11965"/>
        <dbReference type="ChEBI" id="CHEBI:15377"/>
        <dbReference type="ChEBI" id="CHEBI:15378"/>
        <dbReference type="ChEBI" id="CHEBI:15379"/>
        <dbReference type="ChEBI" id="CHEBI:20000"/>
        <dbReference type="ChEBI" id="CHEBI:57618"/>
        <dbReference type="ChEBI" id="CHEBI:58210"/>
        <dbReference type="ChEBI" id="CHEBI:188496"/>
    </reaction>
    <physiologicalReaction direction="left-to-right" evidence="3">
        <dbReference type="Rhea" id="RHEA:69952"/>
    </physiologicalReaction>
</comment>
<comment type="catalytic activity">
    <reaction evidence="3">
        <text>6-deoxotyphasterol + reduced [NADPH--hemoprotein reductase] + O2 = 6alpha-hydroxytyphasterol + oxidized [NADPH--hemoprotein reductase] + H2O + H(+)</text>
        <dbReference type="Rhea" id="RHEA:69939"/>
        <dbReference type="Rhea" id="RHEA-COMP:11964"/>
        <dbReference type="Rhea" id="RHEA-COMP:11965"/>
        <dbReference type="ChEBI" id="CHEBI:15377"/>
        <dbReference type="ChEBI" id="CHEBI:15378"/>
        <dbReference type="ChEBI" id="CHEBI:15379"/>
        <dbReference type="ChEBI" id="CHEBI:20717"/>
        <dbReference type="ChEBI" id="CHEBI:57618"/>
        <dbReference type="ChEBI" id="CHEBI:58210"/>
        <dbReference type="ChEBI" id="CHEBI:188495"/>
    </reaction>
    <physiologicalReaction direction="left-to-right" evidence="3">
        <dbReference type="Rhea" id="RHEA:69940"/>
    </physiologicalReaction>
</comment>
<comment type="catalytic activity">
    <reaction evidence="3">
        <text>6alpha-hydroxytyphasterol + reduced [NADPH--hemoprotein reductase] + O2 = typhasterol + oxidized [NADPH--hemoprotein reductase] + 2 H2O + H(+)</text>
        <dbReference type="Rhea" id="RHEA:69943"/>
        <dbReference type="Rhea" id="RHEA-COMP:11964"/>
        <dbReference type="Rhea" id="RHEA-COMP:11965"/>
        <dbReference type="ChEBI" id="CHEBI:15377"/>
        <dbReference type="ChEBI" id="CHEBI:15378"/>
        <dbReference type="ChEBI" id="CHEBI:15379"/>
        <dbReference type="ChEBI" id="CHEBI:27173"/>
        <dbReference type="ChEBI" id="CHEBI:57618"/>
        <dbReference type="ChEBI" id="CHEBI:58210"/>
        <dbReference type="ChEBI" id="CHEBI:188495"/>
    </reaction>
    <physiologicalReaction direction="left-to-right" evidence="3">
        <dbReference type="Rhea" id="RHEA:69944"/>
    </physiologicalReaction>
</comment>
<comment type="catalytic activity">
    <reaction evidence="3">
        <text>6-deoxocastasterone + reduced [NADPH--hemoprotein reductase] + O2 = 6alpha-hydroxycastasterone + oxidized [NADPH--hemoprotein reductase] + H2O + H(+)</text>
        <dbReference type="Rhea" id="RHEA:69875"/>
        <dbReference type="Rhea" id="RHEA-COMP:11964"/>
        <dbReference type="Rhea" id="RHEA-COMP:11965"/>
        <dbReference type="ChEBI" id="CHEBI:15377"/>
        <dbReference type="ChEBI" id="CHEBI:15378"/>
        <dbReference type="ChEBI" id="CHEBI:15379"/>
        <dbReference type="ChEBI" id="CHEBI:20712"/>
        <dbReference type="ChEBI" id="CHEBI:20760"/>
        <dbReference type="ChEBI" id="CHEBI:57618"/>
        <dbReference type="ChEBI" id="CHEBI:58210"/>
    </reaction>
    <physiologicalReaction direction="left-to-right" evidence="3">
        <dbReference type="Rhea" id="RHEA:69876"/>
    </physiologicalReaction>
</comment>
<comment type="catalytic activity">
    <reaction evidence="3">
        <text>6alpha-hydroxycastasterone + reduced [NADPH--hemoprotein reductase] + O2 = castasterone + oxidized [NADPH--hemoprotein reductase] + 2 H2O + H(+)</text>
        <dbReference type="Rhea" id="RHEA:69879"/>
        <dbReference type="Rhea" id="RHEA-COMP:11964"/>
        <dbReference type="Rhea" id="RHEA-COMP:11965"/>
        <dbReference type="ChEBI" id="CHEBI:15377"/>
        <dbReference type="ChEBI" id="CHEBI:15378"/>
        <dbReference type="ChEBI" id="CHEBI:15379"/>
        <dbReference type="ChEBI" id="CHEBI:20760"/>
        <dbReference type="ChEBI" id="CHEBI:23051"/>
        <dbReference type="ChEBI" id="CHEBI:57618"/>
        <dbReference type="ChEBI" id="CHEBI:58210"/>
    </reaction>
    <physiologicalReaction direction="left-to-right" evidence="3">
        <dbReference type="Rhea" id="RHEA:69880"/>
    </physiologicalReaction>
</comment>
<comment type="catalytic activity">
    <reaction evidence="3">
        <text>6-deoxo-28-norteasterone + 2 reduced [NADPH--hemoprotein reductase] + 2 O2 = 28-norteasterone + 2 oxidized [NADPH--hemoprotein reductase] + 3 H2O + 2 H(+)</text>
        <dbReference type="Rhea" id="RHEA:70111"/>
        <dbReference type="Rhea" id="RHEA-COMP:11964"/>
        <dbReference type="Rhea" id="RHEA-COMP:11965"/>
        <dbReference type="ChEBI" id="CHEBI:15377"/>
        <dbReference type="ChEBI" id="CHEBI:15378"/>
        <dbReference type="ChEBI" id="CHEBI:15379"/>
        <dbReference type="ChEBI" id="CHEBI:57618"/>
        <dbReference type="ChEBI" id="CHEBI:58210"/>
        <dbReference type="ChEBI" id="CHEBI:188985"/>
        <dbReference type="ChEBI" id="CHEBI:188988"/>
    </reaction>
    <physiologicalReaction direction="left-to-right" evidence="3">
        <dbReference type="Rhea" id="RHEA:70112"/>
    </physiologicalReaction>
</comment>
<comment type="catalytic activity">
    <reaction evidence="3">
        <text>6-deoxo-28-norteasterone + reduced [NADPH--hemoprotein reductase] + O2 = 6alpha-hydroxy-28-norteasterone + oxidized [NADPH--hemoprotein reductase] + H2O + H(+)</text>
        <dbReference type="Rhea" id="RHEA:70115"/>
        <dbReference type="Rhea" id="RHEA-COMP:11964"/>
        <dbReference type="Rhea" id="RHEA-COMP:11965"/>
        <dbReference type="ChEBI" id="CHEBI:15377"/>
        <dbReference type="ChEBI" id="CHEBI:15378"/>
        <dbReference type="ChEBI" id="CHEBI:15379"/>
        <dbReference type="ChEBI" id="CHEBI:57618"/>
        <dbReference type="ChEBI" id="CHEBI:58210"/>
        <dbReference type="ChEBI" id="CHEBI:188985"/>
        <dbReference type="ChEBI" id="CHEBI:188987"/>
    </reaction>
    <physiologicalReaction direction="left-to-right" evidence="3">
        <dbReference type="Rhea" id="RHEA:70116"/>
    </physiologicalReaction>
</comment>
<comment type="catalytic activity">
    <reaction evidence="3">
        <text>6alpha-hydroxy-28-norteasterone + reduced [NADPH--hemoprotein reductase] + O2 = 28-norteasterone + oxidized [NADPH--hemoprotein reductase] + 2 H2O + H(+)</text>
        <dbReference type="Rhea" id="RHEA:70119"/>
        <dbReference type="Rhea" id="RHEA-COMP:11964"/>
        <dbReference type="Rhea" id="RHEA-COMP:11965"/>
        <dbReference type="ChEBI" id="CHEBI:15377"/>
        <dbReference type="ChEBI" id="CHEBI:15378"/>
        <dbReference type="ChEBI" id="CHEBI:15379"/>
        <dbReference type="ChEBI" id="CHEBI:57618"/>
        <dbReference type="ChEBI" id="CHEBI:58210"/>
        <dbReference type="ChEBI" id="CHEBI:188987"/>
        <dbReference type="ChEBI" id="CHEBI:188988"/>
    </reaction>
    <physiologicalReaction direction="left-to-right" evidence="3">
        <dbReference type="Rhea" id="RHEA:70120"/>
    </physiologicalReaction>
</comment>
<comment type="catalytic activity">
    <reaction evidence="3">
        <text>6-deoxo-28-nortyphasterol + 2 reduced [NADPH--hemoprotein reductase] + 2 O2 = 28-nortyphasterol + 2 oxidized [NADPH--hemoprotein reductase] + 3 H2O + 2 H(+)</text>
        <dbReference type="Rhea" id="RHEA:70135"/>
        <dbReference type="Rhea" id="RHEA-COMP:11964"/>
        <dbReference type="Rhea" id="RHEA-COMP:11965"/>
        <dbReference type="ChEBI" id="CHEBI:15377"/>
        <dbReference type="ChEBI" id="CHEBI:15378"/>
        <dbReference type="ChEBI" id="CHEBI:15379"/>
        <dbReference type="ChEBI" id="CHEBI:57618"/>
        <dbReference type="ChEBI" id="CHEBI:58210"/>
        <dbReference type="ChEBI" id="CHEBI:188992"/>
        <dbReference type="ChEBI" id="CHEBI:188994"/>
    </reaction>
    <physiologicalReaction direction="left-to-right" evidence="3">
        <dbReference type="Rhea" id="RHEA:70136"/>
    </physiologicalReaction>
</comment>
<comment type="catalytic activity">
    <reaction evidence="3">
        <text>6-deoxo-28-nortyphasterol + reduced [NADPH--hemoprotein reductase] + O2 = 6alpha-hydroxy-28-nortyphasterol + oxidized [NADPH--hemoprotein reductase] + H2O + H(+)</text>
        <dbReference type="Rhea" id="RHEA:70139"/>
        <dbReference type="Rhea" id="RHEA-COMP:11964"/>
        <dbReference type="Rhea" id="RHEA-COMP:11965"/>
        <dbReference type="ChEBI" id="CHEBI:15377"/>
        <dbReference type="ChEBI" id="CHEBI:15378"/>
        <dbReference type="ChEBI" id="CHEBI:15379"/>
        <dbReference type="ChEBI" id="CHEBI:57618"/>
        <dbReference type="ChEBI" id="CHEBI:58210"/>
        <dbReference type="ChEBI" id="CHEBI:188992"/>
        <dbReference type="ChEBI" id="CHEBI:188993"/>
    </reaction>
    <physiologicalReaction direction="left-to-right" evidence="3">
        <dbReference type="Rhea" id="RHEA:70140"/>
    </physiologicalReaction>
</comment>
<comment type="catalytic activity">
    <reaction evidence="3">
        <text>6alpha-hydroxy-28-nortyphasterol + reduced [NADPH--hemoprotein reductase] + O2 = 28-nortyphasterol + oxidized [NADPH--hemoprotein reductase] + 2 H2O + H(+)</text>
        <dbReference type="Rhea" id="RHEA:70143"/>
        <dbReference type="Rhea" id="RHEA-COMP:11964"/>
        <dbReference type="Rhea" id="RHEA-COMP:11965"/>
        <dbReference type="ChEBI" id="CHEBI:15377"/>
        <dbReference type="ChEBI" id="CHEBI:15378"/>
        <dbReference type="ChEBI" id="CHEBI:15379"/>
        <dbReference type="ChEBI" id="CHEBI:57618"/>
        <dbReference type="ChEBI" id="CHEBI:58210"/>
        <dbReference type="ChEBI" id="CHEBI:188993"/>
        <dbReference type="ChEBI" id="CHEBI:188994"/>
    </reaction>
    <physiologicalReaction direction="left-to-right" evidence="3">
        <dbReference type="Rhea" id="RHEA:70144"/>
    </physiologicalReaction>
</comment>
<comment type="catalytic activity">
    <reaction evidence="3">
        <text>6-deoxo-28-norcastasterone + 2 reduced [NADPH--hemoprotein reductase] + 2 O2 = 28-norcastasterone + 2 oxidized [NADPH--hemoprotein reductase] + 3 H2O + 2 H(+)</text>
        <dbReference type="Rhea" id="RHEA:70147"/>
        <dbReference type="Rhea" id="RHEA-COMP:11964"/>
        <dbReference type="Rhea" id="RHEA-COMP:11965"/>
        <dbReference type="ChEBI" id="CHEBI:15377"/>
        <dbReference type="ChEBI" id="CHEBI:15378"/>
        <dbReference type="ChEBI" id="CHEBI:15379"/>
        <dbReference type="ChEBI" id="CHEBI:57618"/>
        <dbReference type="ChEBI" id="CHEBI:58210"/>
        <dbReference type="ChEBI" id="CHEBI:188995"/>
        <dbReference type="ChEBI" id="CHEBI:188997"/>
    </reaction>
    <physiologicalReaction direction="left-to-right" evidence="3">
        <dbReference type="Rhea" id="RHEA:70148"/>
    </physiologicalReaction>
</comment>
<comment type="catalytic activity">
    <reaction evidence="3">
        <text>6-deoxo-28-norcastasterone + reduced [NADPH--hemoprotein reductase] + O2 = 6alpha-hydroxy-28-norcastasterone + oxidized [NADPH--hemoprotein reductase] + H2O + H(+)</text>
        <dbReference type="Rhea" id="RHEA:70151"/>
        <dbReference type="Rhea" id="RHEA-COMP:11964"/>
        <dbReference type="Rhea" id="RHEA-COMP:11965"/>
        <dbReference type="ChEBI" id="CHEBI:15377"/>
        <dbReference type="ChEBI" id="CHEBI:15378"/>
        <dbReference type="ChEBI" id="CHEBI:15379"/>
        <dbReference type="ChEBI" id="CHEBI:57618"/>
        <dbReference type="ChEBI" id="CHEBI:58210"/>
        <dbReference type="ChEBI" id="CHEBI:188995"/>
        <dbReference type="ChEBI" id="CHEBI:188996"/>
    </reaction>
    <physiologicalReaction direction="left-to-right" evidence="3">
        <dbReference type="Rhea" id="RHEA:70152"/>
    </physiologicalReaction>
</comment>
<comment type="catalytic activity">
    <reaction evidence="3">
        <text>6alpha-hydroxy-28-norcastasterone + reduced [NADPH--hemoprotein reductase] + O2 = 28-norcastasterone + oxidized [NADPH--hemoprotein reductase] + 2 H2O + H(+)</text>
        <dbReference type="Rhea" id="RHEA:70155"/>
        <dbReference type="Rhea" id="RHEA-COMP:11964"/>
        <dbReference type="Rhea" id="RHEA-COMP:11965"/>
        <dbReference type="ChEBI" id="CHEBI:15377"/>
        <dbReference type="ChEBI" id="CHEBI:15378"/>
        <dbReference type="ChEBI" id="CHEBI:15379"/>
        <dbReference type="ChEBI" id="CHEBI:57618"/>
        <dbReference type="ChEBI" id="CHEBI:58210"/>
        <dbReference type="ChEBI" id="CHEBI:188996"/>
        <dbReference type="ChEBI" id="CHEBI:188997"/>
    </reaction>
    <physiologicalReaction direction="left-to-right" evidence="3">
        <dbReference type="Rhea" id="RHEA:70156"/>
    </physiologicalReaction>
</comment>
<comment type="catalytic activity">
    <reaction evidence="3">
        <text>3-dehydro-6-deoxo-28-norteasterone + 2 reduced [NADPH--hemoprotein reductase] + 2 O2 = 6-dehydro-28-norteasterone + 2 oxidized [NADPH--hemoprotein reductase] + 3 H2O + 2 H(+)</text>
        <dbReference type="Rhea" id="RHEA:70123"/>
        <dbReference type="Rhea" id="RHEA-COMP:11964"/>
        <dbReference type="Rhea" id="RHEA-COMP:11965"/>
        <dbReference type="ChEBI" id="CHEBI:15377"/>
        <dbReference type="ChEBI" id="CHEBI:15378"/>
        <dbReference type="ChEBI" id="CHEBI:15379"/>
        <dbReference type="ChEBI" id="CHEBI:57618"/>
        <dbReference type="ChEBI" id="CHEBI:58210"/>
        <dbReference type="ChEBI" id="CHEBI:188989"/>
        <dbReference type="ChEBI" id="CHEBI:188991"/>
    </reaction>
    <physiologicalReaction direction="left-to-right" evidence="3">
        <dbReference type="Rhea" id="RHEA:70124"/>
    </physiologicalReaction>
</comment>
<comment type="catalytic activity">
    <reaction evidence="3">
        <text>3-dehydro-6-deoxo-28-norteasterone + reduced [NADPH--hemoprotein reductase] + O2 = 3-dehydro-6alpha-hydroxy-28-norteasterone + oxidized [NADPH--hemoprotein reductase] + H2O + H(+)</text>
        <dbReference type="Rhea" id="RHEA:70127"/>
        <dbReference type="Rhea" id="RHEA-COMP:11964"/>
        <dbReference type="Rhea" id="RHEA-COMP:11965"/>
        <dbReference type="ChEBI" id="CHEBI:15377"/>
        <dbReference type="ChEBI" id="CHEBI:15378"/>
        <dbReference type="ChEBI" id="CHEBI:15379"/>
        <dbReference type="ChEBI" id="CHEBI:57618"/>
        <dbReference type="ChEBI" id="CHEBI:58210"/>
        <dbReference type="ChEBI" id="CHEBI:188989"/>
        <dbReference type="ChEBI" id="CHEBI:188990"/>
    </reaction>
    <physiologicalReaction direction="left-to-right" evidence="3">
        <dbReference type="Rhea" id="RHEA:70128"/>
    </physiologicalReaction>
</comment>
<comment type="catalytic activity">
    <reaction evidence="3">
        <text>3-dehydro-6alpha-hydroxy-28-norteasterone + reduced [NADPH--hemoprotein reductase] + O2 = 6-dehydro-28-norteasterone + oxidized [NADPH--hemoprotein reductase] + 2 H2O + H(+)</text>
        <dbReference type="Rhea" id="RHEA:70131"/>
        <dbReference type="Rhea" id="RHEA-COMP:11964"/>
        <dbReference type="Rhea" id="RHEA-COMP:11965"/>
        <dbReference type="ChEBI" id="CHEBI:15377"/>
        <dbReference type="ChEBI" id="CHEBI:15378"/>
        <dbReference type="ChEBI" id="CHEBI:15379"/>
        <dbReference type="ChEBI" id="CHEBI:57618"/>
        <dbReference type="ChEBI" id="CHEBI:58210"/>
        <dbReference type="ChEBI" id="CHEBI:188990"/>
        <dbReference type="ChEBI" id="CHEBI:188991"/>
    </reaction>
    <physiologicalReaction direction="left-to-right" evidence="3">
        <dbReference type="Rhea" id="RHEA:70132"/>
    </physiologicalReaction>
</comment>
<comment type="catalytic activity">
    <reaction evidence="7">
        <text>teasterone + reduced [NADPH--hemoprotein reductase] + O2 = 7-oxateasterone + oxidized [NADPH--hemoprotein reductase] + H2O + H(+)</text>
        <dbReference type="Rhea" id="RHEA:70015"/>
        <dbReference type="Rhea" id="RHEA-COMP:11964"/>
        <dbReference type="Rhea" id="RHEA-COMP:11965"/>
        <dbReference type="ChEBI" id="CHEBI:15377"/>
        <dbReference type="ChEBI" id="CHEBI:15378"/>
        <dbReference type="ChEBI" id="CHEBI:15379"/>
        <dbReference type="ChEBI" id="CHEBI:26863"/>
        <dbReference type="ChEBI" id="CHEBI:57618"/>
        <dbReference type="ChEBI" id="CHEBI:58210"/>
        <dbReference type="ChEBI" id="CHEBI:188918"/>
        <dbReference type="EC" id="1.14.14.180"/>
    </reaction>
    <physiologicalReaction direction="left-to-right" evidence="7">
        <dbReference type="Rhea" id="RHEA:70016"/>
    </physiologicalReaction>
</comment>
<comment type="catalytic activity">
    <reaction evidence="5 6 7">
        <text>castasterone + reduced [NADPH--hemoprotein reductase] + O2 = brassinolide + oxidized [NADPH--hemoprotein reductase] + H2O + H(+)</text>
        <dbReference type="Rhea" id="RHEA:69923"/>
        <dbReference type="Rhea" id="RHEA-COMP:11964"/>
        <dbReference type="Rhea" id="RHEA-COMP:11965"/>
        <dbReference type="ChEBI" id="CHEBI:15377"/>
        <dbReference type="ChEBI" id="CHEBI:15378"/>
        <dbReference type="ChEBI" id="CHEBI:15379"/>
        <dbReference type="ChEBI" id="CHEBI:23051"/>
        <dbReference type="ChEBI" id="CHEBI:28277"/>
        <dbReference type="ChEBI" id="CHEBI:57618"/>
        <dbReference type="ChEBI" id="CHEBI:58210"/>
        <dbReference type="EC" id="1.14.14.180"/>
    </reaction>
    <physiologicalReaction direction="left-to-right" evidence="5 6 7">
        <dbReference type="Rhea" id="RHEA:69924"/>
    </physiologicalReaction>
</comment>
<comment type="catalytic activity">
    <reaction evidence="7">
        <text>typhasterol + reduced [NADPH--hemoprotein reductase] + O2 = 7-oxatyphasterol + oxidized [NADPH--hemoprotein reductase] + H2O + H(+)</text>
        <dbReference type="Rhea" id="RHEA:70019"/>
        <dbReference type="Rhea" id="RHEA-COMP:11964"/>
        <dbReference type="Rhea" id="RHEA-COMP:11965"/>
        <dbReference type="ChEBI" id="CHEBI:15377"/>
        <dbReference type="ChEBI" id="CHEBI:15378"/>
        <dbReference type="ChEBI" id="CHEBI:15379"/>
        <dbReference type="ChEBI" id="CHEBI:27173"/>
        <dbReference type="ChEBI" id="CHEBI:57618"/>
        <dbReference type="ChEBI" id="CHEBI:58210"/>
        <dbReference type="ChEBI" id="CHEBI:185407"/>
        <dbReference type="EC" id="1.14.14.180"/>
    </reaction>
    <physiologicalReaction direction="left-to-right" evidence="7">
        <dbReference type="Rhea" id="RHEA:70020"/>
    </physiologicalReaction>
</comment>
<comment type="catalytic activity">
    <reaction evidence="3 5 6">
        <text>6-deoxocastasterone + 2 reduced [NADPH--hemoprotein reductase] + 2 O2 = castasterone + 2 oxidized [NADPH--hemoprotein reductase] + 3 H2O + 2 H(+)</text>
        <dbReference type="Rhea" id="RHEA:70031"/>
        <dbReference type="Rhea" id="RHEA-COMP:11964"/>
        <dbReference type="Rhea" id="RHEA-COMP:11965"/>
        <dbReference type="ChEBI" id="CHEBI:15377"/>
        <dbReference type="ChEBI" id="CHEBI:15378"/>
        <dbReference type="ChEBI" id="CHEBI:15379"/>
        <dbReference type="ChEBI" id="CHEBI:20712"/>
        <dbReference type="ChEBI" id="CHEBI:23051"/>
        <dbReference type="ChEBI" id="CHEBI:57618"/>
        <dbReference type="ChEBI" id="CHEBI:58210"/>
        <dbReference type="EC" id="1.14.14.179"/>
    </reaction>
    <physiologicalReaction direction="left-to-right" evidence="3 5 6">
        <dbReference type="Rhea" id="RHEA:70032"/>
    </physiologicalReaction>
</comment>
<comment type="catalytic activity">
    <reaction evidence="3">
        <text>6-deoxoteasterone + 2 reduced [NADPH--hemoprotein reductase] + 2 O2 = teasterone + 2 oxidized [NADPH--hemoprotein reductase] + 3 H2O + 2 H(+)</text>
        <dbReference type="Rhea" id="RHEA:70043"/>
        <dbReference type="Rhea" id="RHEA-COMP:11964"/>
        <dbReference type="Rhea" id="RHEA-COMP:11965"/>
        <dbReference type="ChEBI" id="CHEBI:15377"/>
        <dbReference type="ChEBI" id="CHEBI:15378"/>
        <dbReference type="ChEBI" id="CHEBI:15379"/>
        <dbReference type="ChEBI" id="CHEBI:20716"/>
        <dbReference type="ChEBI" id="CHEBI:26863"/>
        <dbReference type="ChEBI" id="CHEBI:57618"/>
        <dbReference type="ChEBI" id="CHEBI:58210"/>
        <dbReference type="EC" id="1.14.14.179"/>
    </reaction>
    <physiologicalReaction direction="left-to-right" evidence="3">
        <dbReference type="Rhea" id="RHEA:70044"/>
    </physiologicalReaction>
</comment>
<comment type="catalytic activity">
    <reaction evidence="3">
        <text>6-deoxotyphasterol + 2 reduced [NADPH--hemoprotein reductase] + 2 O2 = typhasterol + 2 oxidized [NADPH--hemoprotein reductase] + 3 H2O + 2 H(+)</text>
        <dbReference type="Rhea" id="RHEA:70035"/>
        <dbReference type="Rhea" id="RHEA-COMP:11964"/>
        <dbReference type="Rhea" id="RHEA-COMP:11965"/>
        <dbReference type="ChEBI" id="CHEBI:15377"/>
        <dbReference type="ChEBI" id="CHEBI:15378"/>
        <dbReference type="ChEBI" id="CHEBI:15379"/>
        <dbReference type="ChEBI" id="CHEBI:20717"/>
        <dbReference type="ChEBI" id="CHEBI:27173"/>
        <dbReference type="ChEBI" id="CHEBI:57618"/>
        <dbReference type="ChEBI" id="CHEBI:58210"/>
        <dbReference type="EC" id="1.14.14.179"/>
    </reaction>
    <physiologicalReaction direction="left-to-right" evidence="3">
        <dbReference type="Rhea" id="RHEA:70036"/>
    </physiologicalReaction>
</comment>
<comment type="catalytic activity">
    <reaction evidence="3">
        <text>3-dehydro-6-deoxoteasterone + 2 reduced [NADPH--hemoprotein reductase] + 2 O2 = 3-dehydroteasterone + 2 oxidized [NADPH--hemoprotein reductase] + 3 H2O + 2 H(+)</text>
        <dbReference type="Rhea" id="RHEA:70039"/>
        <dbReference type="Rhea" id="RHEA-COMP:11964"/>
        <dbReference type="Rhea" id="RHEA-COMP:11965"/>
        <dbReference type="ChEBI" id="CHEBI:15377"/>
        <dbReference type="ChEBI" id="CHEBI:15378"/>
        <dbReference type="ChEBI" id="CHEBI:15379"/>
        <dbReference type="ChEBI" id="CHEBI:20000"/>
        <dbReference type="ChEBI" id="CHEBI:20710"/>
        <dbReference type="ChEBI" id="CHEBI:57618"/>
        <dbReference type="ChEBI" id="CHEBI:58210"/>
        <dbReference type="EC" id="1.14.14.179"/>
    </reaction>
    <physiologicalReaction direction="left-to-right" evidence="3">
        <dbReference type="Rhea" id="RHEA:70040"/>
    </physiologicalReaction>
</comment>
<comment type="cofactor">
    <cofactor evidence="1">
        <name>heme</name>
        <dbReference type="ChEBI" id="CHEBI:30413"/>
    </cofactor>
</comment>
<comment type="pathway">
    <text evidence="3 5 6 8">Plant hormone biosynthesis; brassinosteroid biosynthesis.</text>
</comment>
<comment type="subcellular location">
    <subcellularLocation>
        <location evidence="2">Membrane</location>
        <topology evidence="2">Single-pass membrane protein</topology>
    </subcellularLocation>
    <subcellularLocation>
        <location evidence="9">Endoplasmic reticulum</location>
    </subcellularLocation>
    <text evidence="9">Concentrates in endoplasmic reticulum subdomains adjacent to chloroplasts when farnesylated.</text>
</comment>
<comment type="tissue specificity">
    <text evidence="4 10">Expressed in stems, hypocotyls, leaves, siliques, shoots, and roots, with a higher expression in apical shoots.</text>
</comment>
<comment type="induction">
    <text evidence="4 10">Repressed by brassinolide (BL) treatment (PubMed:12529536). Induced rapidly and transiently in seedlings hooks, petioles and cotyledons but fades out of hypocotyls after exposure to light (PubMed:32333772).</text>
</comment>
<comment type="PTM">
    <text evidence="9">Isoprenylated (farnesylated); this addition of a 15-carbon farnesyl isoprenoid to the carboxy terminus is required for endoplasmic reticulum localization and essential for the biosynthesis of brassinolide.</text>
</comment>
<comment type="disruption phenotype">
    <text evidence="6 9">Reduced brassinolide accumulation but increased responsiveness to abscisic acid (ABA) and overall drought tolerance.</text>
</comment>
<comment type="similarity">
    <text evidence="15">Belongs to the cytochrome P450 family.</text>
</comment>
<comment type="sequence caution" evidence="15">
    <conflict type="erroneous initiation">
        <sequence resource="EMBL-CDS" id="AAM61160"/>
    </conflict>
    <text>Truncated N-terminus.</text>
</comment>
<dbReference type="EC" id="1.14.14.180" evidence="6 7 5"/>
<dbReference type="EC" id="1.14.14.-" evidence="8"/>
<dbReference type="EC" id="1.14.14.179" evidence="3 5 6"/>
<dbReference type="EMBL" id="AB087801">
    <property type="protein sequence ID" value="BAC55065.1"/>
    <property type="molecule type" value="mRNA"/>
</dbReference>
<dbReference type="EMBL" id="AP002060">
    <property type="protein sequence ID" value="BAB02270.1"/>
    <property type="molecule type" value="Genomic_DNA"/>
</dbReference>
<dbReference type="EMBL" id="CP002686">
    <property type="protein sequence ID" value="AEE77620.1"/>
    <property type="molecule type" value="Genomic_DNA"/>
</dbReference>
<dbReference type="EMBL" id="AY052655">
    <property type="protein sequence ID" value="AAK96559.1"/>
    <property type="molecule type" value="mRNA"/>
</dbReference>
<dbReference type="EMBL" id="AY063728">
    <property type="protein sequence ID" value="AAL36078.1"/>
    <property type="molecule type" value="mRNA"/>
</dbReference>
<dbReference type="EMBL" id="AY084595">
    <property type="protein sequence ID" value="AAM61160.1"/>
    <property type="status" value="ALT_INIT"/>
    <property type="molecule type" value="mRNA"/>
</dbReference>
<dbReference type="RefSeq" id="NP_566852.1">
    <property type="nucleotide sequence ID" value="NM_113917.4"/>
</dbReference>
<dbReference type="SMR" id="Q940V4"/>
<dbReference type="BioGRID" id="8036">
    <property type="interactions" value="12"/>
</dbReference>
<dbReference type="FunCoup" id="Q940V4">
    <property type="interactions" value="196"/>
</dbReference>
<dbReference type="IntAct" id="Q940V4">
    <property type="interactions" value="12"/>
</dbReference>
<dbReference type="STRING" id="3702.Q940V4"/>
<dbReference type="iPTMnet" id="Q940V4"/>
<dbReference type="PaxDb" id="3702-AT3G30180.1"/>
<dbReference type="ProteomicsDB" id="240568"/>
<dbReference type="EnsemblPlants" id="AT3G30180.1">
    <property type="protein sequence ID" value="AT3G30180.1"/>
    <property type="gene ID" value="AT3G30180"/>
</dbReference>
<dbReference type="GeneID" id="822709"/>
<dbReference type="Gramene" id="AT3G30180.1">
    <property type="protein sequence ID" value="AT3G30180.1"/>
    <property type="gene ID" value="AT3G30180"/>
</dbReference>
<dbReference type="KEGG" id="ath:AT3G30180"/>
<dbReference type="Araport" id="AT3G30180"/>
<dbReference type="TAIR" id="AT3G30180">
    <property type="gene designation" value="BR6OX2"/>
</dbReference>
<dbReference type="eggNOG" id="KOG0157">
    <property type="taxonomic scope" value="Eukaryota"/>
</dbReference>
<dbReference type="HOGENOM" id="CLU_001570_15_5_1"/>
<dbReference type="InParanoid" id="Q940V4"/>
<dbReference type="OMA" id="NQVKYNN"/>
<dbReference type="PhylomeDB" id="Q940V4"/>
<dbReference type="BioCyc" id="ARA:AT3G30180-MONOMER"/>
<dbReference type="BioCyc" id="MetaCyc:AT3G30180-MONOMER"/>
<dbReference type="UniPathway" id="UPA00381"/>
<dbReference type="PRO" id="PR:Q940V4"/>
<dbReference type="Proteomes" id="UP000006548">
    <property type="component" value="Chromosome 3"/>
</dbReference>
<dbReference type="ExpressionAtlas" id="Q940V4">
    <property type="expression patterns" value="baseline and differential"/>
</dbReference>
<dbReference type="GO" id="GO:0005783">
    <property type="term" value="C:endoplasmic reticulum"/>
    <property type="evidence" value="ECO:0000314"/>
    <property type="project" value="UniProtKB"/>
</dbReference>
<dbReference type="GO" id="GO:0016020">
    <property type="term" value="C:membrane"/>
    <property type="evidence" value="ECO:0007669"/>
    <property type="project" value="UniProtKB-SubCell"/>
</dbReference>
<dbReference type="GO" id="GO:0102734">
    <property type="term" value="F:brassinolide synthase activity"/>
    <property type="evidence" value="ECO:0000315"/>
    <property type="project" value="UniProtKB"/>
</dbReference>
<dbReference type="GO" id="GO:0020037">
    <property type="term" value="F:heme binding"/>
    <property type="evidence" value="ECO:0007669"/>
    <property type="project" value="InterPro"/>
</dbReference>
<dbReference type="GO" id="GO:0005506">
    <property type="term" value="F:iron ion binding"/>
    <property type="evidence" value="ECO:0007669"/>
    <property type="project" value="InterPro"/>
</dbReference>
<dbReference type="GO" id="GO:0004497">
    <property type="term" value="F:monooxygenase activity"/>
    <property type="evidence" value="ECO:0000314"/>
    <property type="project" value="TAIR"/>
</dbReference>
<dbReference type="GO" id="GO:0016132">
    <property type="term" value="P:brassinosteroid biosynthetic process"/>
    <property type="evidence" value="ECO:0000314"/>
    <property type="project" value="TAIR"/>
</dbReference>
<dbReference type="GO" id="GO:0018343">
    <property type="term" value="P:protein farnesylation"/>
    <property type="evidence" value="ECO:0000314"/>
    <property type="project" value="UniProtKB"/>
</dbReference>
<dbReference type="GO" id="GO:0009416">
    <property type="term" value="P:response to light stimulus"/>
    <property type="evidence" value="ECO:0000270"/>
    <property type="project" value="UniProtKB"/>
</dbReference>
<dbReference type="CDD" id="cd11043">
    <property type="entry name" value="CYP90-like"/>
    <property type="match status" value="1"/>
</dbReference>
<dbReference type="FunFam" id="1.10.630.10:FF:000045">
    <property type="entry name" value="Cytochrome P450 85A1"/>
    <property type="match status" value="1"/>
</dbReference>
<dbReference type="Gene3D" id="1.10.630.10">
    <property type="entry name" value="Cytochrome P450"/>
    <property type="match status" value="1"/>
</dbReference>
<dbReference type="InterPro" id="IPR001128">
    <property type="entry name" value="Cyt_P450"/>
</dbReference>
<dbReference type="InterPro" id="IPR017972">
    <property type="entry name" value="Cyt_P450_CS"/>
</dbReference>
<dbReference type="InterPro" id="IPR002401">
    <property type="entry name" value="Cyt_P450_E_grp-I"/>
</dbReference>
<dbReference type="InterPro" id="IPR036396">
    <property type="entry name" value="Cyt_P450_sf"/>
</dbReference>
<dbReference type="PANTHER" id="PTHR24286">
    <property type="entry name" value="CYTOCHROME P450 26"/>
    <property type="match status" value="1"/>
</dbReference>
<dbReference type="PANTHER" id="PTHR24286:SF361">
    <property type="entry name" value="CYTOCHROME P450 85A2"/>
    <property type="match status" value="1"/>
</dbReference>
<dbReference type="Pfam" id="PF00067">
    <property type="entry name" value="p450"/>
    <property type="match status" value="1"/>
</dbReference>
<dbReference type="PRINTS" id="PR00463">
    <property type="entry name" value="EP450I"/>
</dbReference>
<dbReference type="PRINTS" id="PR00385">
    <property type="entry name" value="P450"/>
</dbReference>
<dbReference type="SUPFAM" id="SSF48264">
    <property type="entry name" value="Cytochrome P450"/>
    <property type="match status" value="1"/>
</dbReference>
<dbReference type="PROSITE" id="PS00086">
    <property type="entry name" value="CYTOCHROME_P450"/>
    <property type="match status" value="1"/>
</dbReference>